<accession>A0ZZ76</accession>
<proteinExistence type="inferred from homology"/>
<reference key="1">
    <citation type="journal article" date="2006" name="Genes Genet. Syst.">
        <title>Complete nucleotide sequence of the cotton (Gossypium barbadense L.) chloroplast genome with a comparative analysis of sequences among 9 dicot plants.</title>
        <authorList>
            <person name="Ibrahim R.I.H."/>
            <person name="Azuma J."/>
            <person name="Sakamoto M."/>
        </authorList>
    </citation>
    <scope>NUCLEOTIDE SEQUENCE [LARGE SCALE GENOMIC DNA]</scope>
</reference>
<organism>
    <name type="scientific">Gossypium barbadense</name>
    <name type="common">Sea Island cotton</name>
    <name type="synonym">Hibiscus barbadensis</name>
    <dbReference type="NCBI Taxonomy" id="3634"/>
    <lineage>
        <taxon>Eukaryota</taxon>
        <taxon>Viridiplantae</taxon>
        <taxon>Streptophyta</taxon>
        <taxon>Embryophyta</taxon>
        <taxon>Tracheophyta</taxon>
        <taxon>Spermatophyta</taxon>
        <taxon>Magnoliopsida</taxon>
        <taxon>eudicotyledons</taxon>
        <taxon>Gunneridae</taxon>
        <taxon>Pentapetalae</taxon>
        <taxon>rosids</taxon>
        <taxon>malvids</taxon>
        <taxon>Malvales</taxon>
        <taxon>Malvaceae</taxon>
        <taxon>Malvoideae</taxon>
        <taxon>Gossypium</taxon>
    </lineage>
</organism>
<sequence length="274" mass="29935">MAIHLYKTSTPGTRNGAVDSQVKSNPRNNLIYGQHRCGKGRNARGIITARHRGGGHKRLYRKIDFRRNEKDIYGRIVTIEYDPNRNAYICFIHYGDGEKRYILHPRGAIIGDIIVSGTEVPIKMGNALPLTDMPLGTAIHNIEITLGRGGQLARAAGAVAKLIAKEGKSATLKLPSGEVRLISKNCSATVGQVGNVGVNQKSLGRAGSKCWLGKRPVVRGVVMNPVDHPHGGGEGRAPIGRKKPATPWGHPALGRRSRKRNKYSDNLILRRRSK</sequence>
<keyword id="KW-0150">Chloroplast</keyword>
<keyword id="KW-0934">Plastid</keyword>
<keyword id="KW-0687">Ribonucleoprotein</keyword>
<keyword id="KW-0689">Ribosomal protein</keyword>
<comment type="subunit">
    <text evidence="1">Part of the 50S ribosomal subunit.</text>
</comment>
<comment type="subcellular location">
    <subcellularLocation>
        <location>Plastid</location>
        <location>Chloroplast</location>
    </subcellularLocation>
</comment>
<comment type="similarity">
    <text evidence="4">Belongs to the universal ribosomal protein uL2 family.</text>
</comment>
<dbReference type="EMBL" id="AP009123">
    <property type="protein sequence ID" value="BAF41288.1"/>
    <property type="molecule type" value="Genomic_DNA"/>
</dbReference>
<dbReference type="EMBL" id="AP009123">
    <property type="protein sequence ID" value="BAF41310.1"/>
    <property type="molecule type" value="Genomic_DNA"/>
</dbReference>
<dbReference type="SMR" id="A0ZZ76"/>
<dbReference type="GO" id="GO:0009507">
    <property type="term" value="C:chloroplast"/>
    <property type="evidence" value="ECO:0007669"/>
    <property type="project" value="UniProtKB-SubCell"/>
</dbReference>
<dbReference type="GO" id="GO:0005762">
    <property type="term" value="C:mitochondrial large ribosomal subunit"/>
    <property type="evidence" value="ECO:0007669"/>
    <property type="project" value="TreeGrafter"/>
</dbReference>
<dbReference type="GO" id="GO:0019843">
    <property type="term" value="F:rRNA binding"/>
    <property type="evidence" value="ECO:0007669"/>
    <property type="project" value="UniProtKB-UniRule"/>
</dbReference>
<dbReference type="GO" id="GO:0003735">
    <property type="term" value="F:structural constituent of ribosome"/>
    <property type="evidence" value="ECO:0007669"/>
    <property type="project" value="InterPro"/>
</dbReference>
<dbReference type="GO" id="GO:0016740">
    <property type="term" value="F:transferase activity"/>
    <property type="evidence" value="ECO:0007669"/>
    <property type="project" value="InterPro"/>
</dbReference>
<dbReference type="GO" id="GO:0032543">
    <property type="term" value="P:mitochondrial translation"/>
    <property type="evidence" value="ECO:0007669"/>
    <property type="project" value="TreeGrafter"/>
</dbReference>
<dbReference type="FunFam" id="4.10.950.10:FF:000001">
    <property type="entry name" value="50S ribosomal protein L2"/>
    <property type="match status" value="1"/>
</dbReference>
<dbReference type="FunFam" id="2.30.30.30:FF:000008">
    <property type="entry name" value="50S ribosomal protein L2, chloroplastic"/>
    <property type="match status" value="1"/>
</dbReference>
<dbReference type="FunFam" id="2.40.50.140:FF:000029">
    <property type="entry name" value="50S ribosomal protein L2, chloroplastic"/>
    <property type="match status" value="1"/>
</dbReference>
<dbReference type="Gene3D" id="2.30.30.30">
    <property type="match status" value="1"/>
</dbReference>
<dbReference type="Gene3D" id="2.40.50.140">
    <property type="entry name" value="Nucleic acid-binding proteins"/>
    <property type="match status" value="1"/>
</dbReference>
<dbReference type="Gene3D" id="4.10.950.10">
    <property type="entry name" value="Ribosomal protein L2, domain 3"/>
    <property type="match status" value="1"/>
</dbReference>
<dbReference type="HAMAP" id="MF_01320_B">
    <property type="entry name" value="Ribosomal_uL2_B"/>
    <property type="match status" value="1"/>
</dbReference>
<dbReference type="InterPro" id="IPR012340">
    <property type="entry name" value="NA-bd_OB-fold"/>
</dbReference>
<dbReference type="InterPro" id="IPR014722">
    <property type="entry name" value="Rib_uL2_dom2"/>
</dbReference>
<dbReference type="InterPro" id="IPR002171">
    <property type="entry name" value="Ribosomal_uL2"/>
</dbReference>
<dbReference type="InterPro" id="IPR005880">
    <property type="entry name" value="Ribosomal_uL2_bac/org-type"/>
</dbReference>
<dbReference type="InterPro" id="IPR022669">
    <property type="entry name" value="Ribosomal_uL2_C"/>
</dbReference>
<dbReference type="InterPro" id="IPR022671">
    <property type="entry name" value="Ribosomal_uL2_CS"/>
</dbReference>
<dbReference type="InterPro" id="IPR014726">
    <property type="entry name" value="Ribosomal_uL2_dom3"/>
</dbReference>
<dbReference type="InterPro" id="IPR022666">
    <property type="entry name" value="Ribosomal_uL2_RNA-bd_dom"/>
</dbReference>
<dbReference type="InterPro" id="IPR008991">
    <property type="entry name" value="Translation_prot_SH3-like_sf"/>
</dbReference>
<dbReference type="NCBIfam" id="TIGR01171">
    <property type="entry name" value="rplB_bact"/>
    <property type="match status" value="1"/>
</dbReference>
<dbReference type="PANTHER" id="PTHR13691:SF5">
    <property type="entry name" value="LARGE RIBOSOMAL SUBUNIT PROTEIN UL2M"/>
    <property type="match status" value="1"/>
</dbReference>
<dbReference type="PANTHER" id="PTHR13691">
    <property type="entry name" value="RIBOSOMAL PROTEIN L2"/>
    <property type="match status" value="1"/>
</dbReference>
<dbReference type="Pfam" id="PF00181">
    <property type="entry name" value="Ribosomal_L2"/>
    <property type="match status" value="1"/>
</dbReference>
<dbReference type="Pfam" id="PF03947">
    <property type="entry name" value="Ribosomal_L2_C"/>
    <property type="match status" value="1"/>
</dbReference>
<dbReference type="PIRSF" id="PIRSF002158">
    <property type="entry name" value="Ribosomal_L2"/>
    <property type="match status" value="1"/>
</dbReference>
<dbReference type="SMART" id="SM01383">
    <property type="entry name" value="Ribosomal_L2"/>
    <property type="match status" value="1"/>
</dbReference>
<dbReference type="SMART" id="SM01382">
    <property type="entry name" value="Ribosomal_L2_C"/>
    <property type="match status" value="1"/>
</dbReference>
<dbReference type="SUPFAM" id="SSF50249">
    <property type="entry name" value="Nucleic acid-binding proteins"/>
    <property type="match status" value="1"/>
</dbReference>
<dbReference type="SUPFAM" id="SSF50104">
    <property type="entry name" value="Translation proteins SH3-like domain"/>
    <property type="match status" value="1"/>
</dbReference>
<dbReference type="PROSITE" id="PS00467">
    <property type="entry name" value="RIBOSOMAL_L2"/>
    <property type="match status" value="1"/>
</dbReference>
<protein>
    <recommendedName>
        <fullName evidence="2">Large ribosomal subunit protein uL2cz/uL2cy</fullName>
    </recommendedName>
    <alternativeName>
        <fullName evidence="4">50S ribosomal protein L2, chloroplastic</fullName>
    </alternativeName>
</protein>
<name>RK2_GOSBA</name>
<feature type="chain" id="PRO_0000277089" description="Large ribosomal subunit protein uL2cz/uL2cy">
    <location>
        <begin position="1"/>
        <end position="274"/>
    </location>
</feature>
<feature type="region of interest" description="Disordered" evidence="3">
    <location>
        <begin position="1"/>
        <end position="21"/>
    </location>
</feature>
<feature type="region of interest" description="Disordered" evidence="3">
    <location>
        <begin position="225"/>
        <end position="274"/>
    </location>
</feature>
<geneLocation type="chloroplast"/>
<evidence type="ECO:0000250" key="1"/>
<evidence type="ECO:0000255" key="2">
    <source>
        <dbReference type="HAMAP-Rule" id="MF_01320"/>
    </source>
</evidence>
<evidence type="ECO:0000256" key="3">
    <source>
        <dbReference type="SAM" id="MobiDB-lite"/>
    </source>
</evidence>
<evidence type="ECO:0000305" key="4"/>
<gene>
    <name type="primary">rpl2-A</name>
</gene>
<gene>
    <name type="primary">rpl2-B</name>
</gene>